<evidence type="ECO:0000255" key="1">
    <source>
        <dbReference type="HAMAP-Rule" id="MF_00435"/>
    </source>
</evidence>
<evidence type="ECO:0000255" key="2">
    <source>
        <dbReference type="PROSITE-ProRule" id="PRU01197"/>
    </source>
</evidence>
<evidence type="ECO:0000255" key="3">
    <source>
        <dbReference type="PROSITE-ProRule" id="PRU01198"/>
    </source>
</evidence>
<name>ILVC_CUPTR</name>
<accession>B3R3V4</accession>
<protein>
    <recommendedName>
        <fullName evidence="1">Ketol-acid reductoisomerase (NADP(+))</fullName>
        <shortName evidence="1">KARI</shortName>
        <ecNumber evidence="1">1.1.1.86</ecNumber>
    </recommendedName>
    <alternativeName>
        <fullName evidence="1">Acetohydroxy-acid isomeroreductase</fullName>
        <shortName evidence="1">AHIR</shortName>
    </alternativeName>
    <alternativeName>
        <fullName evidence="1">Alpha-keto-beta-hydroxylacyl reductoisomerase</fullName>
    </alternativeName>
    <alternativeName>
        <fullName evidence="1">Ketol-acid reductoisomerase type 1</fullName>
    </alternativeName>
    <alternativeName>
        <fullName evidence="1">Ketol-acid reductoisomerase type I</fullName>
    </alternativeName>
</protein>
<proteinExistence type="inferred from homology"/>
<keyword id="KW-0028">Amino-acid biosynthesis</keyword>
<keyword id="KW-0100">Branched-chain amino acid biosynthesis</keyword>
<keyword id="KW-0460">Magnesium</keyword>
<keyword id="KW-0479">Metal-binding</keyword>
<keyword id="KW-0521">NADP</keyword>
<keyword id="KW-0560">Oxidoreductase</keyword>
<organism>
    <name type="scientific">Cupriavidus taiwanensis (strain DSM 17343 / BCRC 17206 / CCUG 44338 / CIP 107171 / LMG 19424 / R1)</name>
    <name type="common">Ralstonia taiwanensis (strain LMG 19424)</name>
    <dbReference type="NCBI Taxonomy" id="977880"/>
    <lineage>
        <taxon>Bacteria</taxon>
        <taxon>Pseudomonadati</taxon>
        <taxon>Pseudomonadota</taxon>
        <taxon>Betaproteobacteria</taxon>
        <taxon>Burkholderiales</taxon>
        <taxon>Burkholderiaceae</taxon>
        <taxon>Cupriavidus</taxon>
    </lineage>
</organism>
<gene>
    <name evidence="1" type="primary">ilvC</name>
    <name type="ordered locus">RALTA_A1021</name>
</gene>
<dbReference type="EC" id="1.1.1.86" evidence="1"/>
<dbReference type="EMBL" id="CU633749">
    <property type="protein sequence ID" value="CAQ68986.1"/>
    <property type="molecule type" value="Genomic_DNA"/>
</dbReference>
<dbReference type="RefSeq" id="WP_012352318.1">
    <property type="nucleotide sequence ID" value="NC_010528.1"/>
</dbReference>
<dbReference type="SMR" id="B3R3V4"/>
<dbReference type="GeneID" id="29761643"/>
<dbReference type="KEGG" id="cti:RALTA_A1021"/>
<dbReference type="eggNOG" id="COG0059">
    <property type="taxonomic scope" value="Bacteria"/>
</dbReference>
<dbReference type="HOGENOM" id="CLU_033821_0_1_4"/>
<dbReference type="BioCyc" id="CTAI977880:RALTA_RS04850-MONOMER"/>
<dbReference type="UniPathway" id="UPA00047">
    <property type="reaction ID" value="UER00056"/>
</dbReference>
<dbReference type="UniPathway" id="UPA00049">
    <property type="reaction ID" value="UER00060"/>
</dbReference>
<dbReference type="Proteomes" id="UP000001692">
    <property type="component" value="Chromosome 1"/>
</dbReference>
<dbReference type="GO" id="GO:0005829">
    <property type="term" value="C:cytosol"/>
    <property type="evidence" value="ECO:0007669"/>
    <property type="project" value="TreeGrafter"/>
</dbReference>
<dbReference type="GO" id="GO:0004455">
    <property type="term" value="F:ketol-acid reductoisomerase activity"/>
    <property type="evidence" value="ECO:0007669"/>
    <property type="project" value="UniProtKB-UniRule"/>
</dbReference>
<dbReference type="GO" id="GO:0000287">
    <property type="term" value="F:magnesium ion binding"/>
    <property type="evidence" value="ECO:0007669"/>
    <property type="project" value="UniProtKB-UniRule"/>
</dbReference>
<dbReference type="GO" id="GO:0050661">
    <property type="term" value="F:NADP binding"/>
    <property type="evidence" value="ECO:0007669"/>
    <property type="project" value="InterPro"/>
</dbReference>
<dbReference type="GO" id="GO:0009097">
    <property type="term" value="P:isoleucine biosynthetic process"/>
    <property type="evidence" value="ECO:0007669"/>
    <property type="project" value="UniProtKB-UniRule"/>
</dbReference>
<dbReference type="GO" id="GO:0009099">
    <property type="term" value="P:L-valine biosynthetic process"/>
    <property type="evidence" value="ECO:0007669"/>
    <property type="project" value="UniProtKB-UniRule"/>
</dbReference>
<dbReference type="FunFam" id="3.40.50.720:FF:000023">
    <property type="entry name" value="Ketol-acid reductoisomerase (NADP(+))"/>
    <property type="match status" value="1"/>
</dbReference>
<dbReference type="Gene3D" id="6.10.240.10">
    <property type="match status" value="1"/>
</dbReference>
<dbReference type="Gene3D" id="3.40.50.720">
    <property type="entry name" value="NAD(P)-binding Rossmann-like Domain"/>
    <property type="match status" value="1"/>
</dbReference>
<dbReference type="HAMAP" id="MF_00435">
    <property type="entry name" value="IlvC"/>
    <property type="match status" value="1"/>
</dbReference>
<dbReference type="InterPro" id="IPR008927">
    <property type="entry name" value="6-PGluconate_DH-like_C_sf"/>
</dbReference>
<dbReference type="InterPro" id="IPR013023">
    <property type="entry name" value="KARI"/>
</dbReference>
<dbReference type="InterPro" id="IPR000506">
    <property type="entry name" value="KARI_C"/>
</dbReference>
<dbReference type="InterPro" id="IPR013116">
    <property type="entry name" value="KARI_N"/>
</dbReference>
<dbReference type="InterPro" id="IPR014359">
    <property type="entry name" value="KARI_prok"/>
</dbReference>
<dbReference type="InterPro" id="IPR036291">
    <property type="entry name" value="NAD(P)-bd_dom_sf"/>
</dbReference>
<dbReference type="NCBIfam" id="TIGR00465">
    <property type="entry name" value="ilvC"/>
    <property type="match status" value="1"/>
</dbReference>
<dbReference type="NCBIfam" id="NF004017">
    <property type="entry name" value="PRK05479.1"/>
    <property type="match status" value="1"/>
</dbReference>
<dbReference type="NCBIfam" id="NF009940">
    <property type="entry name" value="PRK13403.1"/>
    <property type="match status" value="1"/>
</dbReference>
<dbReference type="PANTHER" id="PTHR21371">
    <property type="entry name" value="KETOL-ACID REDUCTOISOMERASE, MITOCHONDRIAL"/>
    <property type="match status" value="1"/>
</dbReference>
<dbReference type="PANTHER" id="PTHR21371:SF1">
    <property type="entry name" value="KETOL-ACID REDUCTOISOMERASE, MITOCHONDRIAL"/>
    <property type="match status" value="1"/>
</dbReference>
<dbReference type="Pfam" id="PF01450">
    <property type="entry name" value="KARI_C"/>
    <property type="match status" value="1"/>
</dbReference>
<dbReference type="Pfam" id="PF07991">
    <property type="entry name" value="KARI_N"/>
    <property type="match status" value="1"/>
</dbReference>
<dbReference type="PIRSF" id="PIRSF000116">
    <property type="entry name" value="IlvC_gammaproteo"/>
    <property type="match status" value="1"/>
</dbReference>
<dbReference type="SUPFAM" id="SSF48179">
    <property type="entry name" value="6-phosphogluconate dehydrogenase C-terminal domain-like"/>
    <property type="match status" value="1"/>
</dbReference>
<dbReference type="SUPFAM" id="SSF51735">
    <property type="entry name" value="NAD(P)-binding Rossmann-fold domains"/>
    <property type="match status" value="1"/>
</dbReference>
<dbReference type="PROSITE" id="PS51851">
    <property type="entry name" value="KARI_C"/>
    <property type="match status" value="1"/>
</dbReference>
<dbReference type="PROSITE" id="PS51850">
    <property type="entry name" value="KARI_N"/>
    <property type="match status" value="1"/>
</dbReference>
<comment type="function">
    <text evidence="1">Involved in the biosynthesis of branched-chain amino acids (BCAA). Catalyzes an alkyl-migration followed by a ketol-acid reduction of (S)-2-acetolactate (S2AL) to yield (R)-2,3-dihydroxy-isovalerate. In the isomerase reaction, S2AL is rearranged via a Mg-dependent methyl migration to produce 3-hydroxy-3-methyl-2-ketobutyrate (HMKB). In the reductase reaction, this 2-ketoacid undergoes a metal-dependent reduction by NADPH to yield (R)-2,3-dihydroxy-isovalerate.</text>
</comment>
<comment type="catalytic activity">
    <reaction evidence="1">
        <text>(2R)-2,3-dihydroxy-3-methylbutanoate + NADP(+) = (2S)-2-acetolactate + NADPH + H(+)</text>
        <dbReference type="Rhea" id="RHEA:22068"/>
        <dbReference type="ChEBI" id="CHEBI:15378"/>
        <dbReference type="ChEBI" id="CHEBI:49072"/>
        <dbReference type="ChEBI" id="CHEBI:57783"/>
        <dbReference type="ChEBI" id="CHEBI:58349"/>
        <dbReference type="ChEBI" id="CHEBI:58476"/>
        <dbReference type="EC" id="1.1.1.86"/>
    </reaction>
</comment>
<comment type="catalytic activity">
    <reaction evidence="1">
        <text>(2R,3R)-2,3-dihydroxy-3-methylpentanoate + NADP(+) = (S)-2-ethyl-2-hydroxy-3-oxobutanoate + NADPH + H(+)</text>
        <dbReference type="Rhea" id="RHEA:13493"/>
        <dbReference type="ChEBI" id="CHEBI:15378"/>
        <dbReference type="ChEBI" id="CHEBI:49256"/>
        <dbReference type="ChEBI" id="CHEBI:49258"/>
        <dbReference type="ChEBI" id="CHEBI:57783"/>
        <dbReference type="ChEBI" id="CHEBI:58349"/>
        <dbReference type="EC" id="1.1.1.86"/>
    </reaction>
</comment>
<comment type="cofactor">
    <cofactor evidence="1">
        <name>Mg(2+)</name>
        <dbReference type="ChEBI" id="CHEBI:18420"/>
    </cofactor>
    <text evidence="1">Binds 2 magnesium ions per subunit.</text>
</comment>
<comment type="pathway">
    <text evidence="1">Amino-acid biosynthesis; L-isoleucine biosynthesis; L-isoleucine from 2-oxobutanoate: step 2/4.</text>
</comment>
<comment type="pathway">
    <text evidence="1">Amino-acid biosynthesis; L-valine biosynthesis; L-valine from pyruvate: step 2/4.</text>
</comment>
<comment type="similarity">
    <text evidence="1">Belongs to the ketol-acid reductoisomerase family.</text>
</comment>
<reference key="1">
    <citation type="journal article" date="2008" name="Genome Res.">
        <title>Genome sequence of the beta-rhizobium Cupriavidus taiwanensis and comparative genomics of rhizobia.</title>
        <authorList>
            <person name="Amadou C."/>
            <person name="Pascal G."/>
            <person name="Mangenot S."/>
            <person name="Glew M."/>
            <person name="Bontemps C."/>
            <person name="Capela D."/>
            <person name="Carrere S."/>
            <person name="Cruveiller S."/>
            <person name="Dossat C."/>
            <person name="Lajus A."/>
            <person name="Marchetti M."/>
            <person name="Poinsot V."/>
            <person name="Rouy Z."/>
            <person name="Servin B."/>
            <person name="Saad M."/>
            <person name="Schenowitz C."/>
            <person name="Barbe V."/>
            <person name="Batut J."/>
            <person name="Medigue C."/>
            <person name="Masson-Boivin C."/>
        </authorList>
    </citation>
    <scope>NUCLEOTIDE SEQUENCE [LARGE SCALE GENOMIC DNA]</scope>
    <source>
        <strain>DSM 17343 / BCRC 17206 / CCUG 44338 / CIP 107171 / LMG 19424 / R1</strain>
    </source>
</reference>
<feature type="chain" id="PRO_1000190939" description="Ketol-acid reductoisomerase (NADP(+))">
    <location>
        <begin position="1"/>
        <end position="338"/>
    </location>
</feature>
<feature type="domain" description="KARI N-terminal Rossmann" evidence="2">
    <location>
        <begin position="1"/>
        <end position="181"/>
    </location>
</feature>
<feature type="domain" description="KARI C-terminal knotted" evidence="3">
    <location>
        <begin position="182"/>
        <end position="327"/>
    </location>
</feature>
<feature type="active site" evidence="1">
    <location>
        <position position="107"/>
    </location>
</feature>
<feature type="binding site" evidence="1">
    <location>
        <begin position="24"/>
        <end position="27"/>
    </location>
    <ligand>
        <name>NADP(+)</name>
        <dbReference type="ChEBI" id="CHEBI:58349"/>
    </ligand>
</feature>
<feature type="binding site" evidence="1">
    <location>
        <position position="47"/>
    </location>
    <ligand>
        <name>NADP(+)</name>
        <dbReference type="ChEBI" id="CHEBI:58349"/>
    </ligand>
</feature>
<feature type="binding site" evidence="1">
    <location>
        <position position="52"/>
    </location>
    <ligand>
        <name>NADP(+)</name>
        <dbReference type="ChEBI" id="CHEBI:58349"/>
    </ligand>
</feature>
<feature type="binding site" evidence="1">
    <location>
        <position position="133"/>
    </location>
    <ligand>
        <name>NADP(+)</name>
        <dbReference type="ChEBI" id="CHEBI:58349"/>
    </ligand>
</feature>
<feature type="binding site" evidence="1">
    <location>
        <position position="190"/>
    </location>
    <ligand>
        <name>Mg(2+)</name>
        <dbReference type="ChEBI" id="CHEBI:18420"/>
        <label>1</label>
    </ligand>
</feature>
<feature type="binding site" evidence="1">
    <location>
        <position position="190"/>
    </location>
    <ligand>
        <name>Mg(2+)</name>
        <dbReference type="ChEBI" id="CHEBI:18420"/>
        <label>2</label>
    </ligand>
</feature>
<feature type="binding site" evidence="1">
    <location>
        <position position="194"/>
    </location>
    <ligand>
        <name>Mg(2+)</name>
        <dbReference type="ChEBI" id="CHEBI:18420"/>
        <label>1</label>
    </ligand>
</feature>
<feature type="binding site" evidence="1">
    <location>
        <position position="226"/>
    </location>
    <ligand>
        <name>Mg(2+)</name>
        <dbReference type="ChEBI" id="CHEBI:18420"/>
        <label>2</label>
    </ligand>
</feature>
<feature type="binding site" evidence="1">
    <location>
        <position position="230"/>
    </location>
    <ligand>
        <name>Mg(2+)</name>
        <dbReference type="ChEBI" id="CHEBI:18420"/>
        <label>2</label>
    </ligand>
</feature>
<feature type="binding site" evidence="1">
    <location>
        <position position="251"/>
    </location>
    <ligand>
        <name>substrate</name>
    </ligand>
</feature>
<sequence length="338" mass="36589">MKVFYDKDADLSLIKGKNVTIIGYGSQGHAHALNLKDSGVNVTVGLRKSGASWNKAVNAGLQVKEVAEAVKNADVVMILLPDEQIADVYKNEVHANIKEGAALAFAHGFNVHYGAVIPRADLDVIMIAPKAPGHTVRATYTQGGGVPHLIAVHQNKSGAARDIALSYATANGGGRAGIIETNFREETETDLFGEQAVLCGGTVELIKAGFETLVEAGYAPEMAYFECLHELKLIVDLIYEGGIANMNYSISNNAEYGEYVTGPRVVTEETKKAMKQCLKDIQTGEYAKSFLLENKAGAPTLISRRRLNAEHEIEVVGEKLRAMMPWIAKNKMVDQSKN</sequence>